<gene>
    <name evidence="1" type="primary">purM</name>
    <name type="ordered locus">llmg_0987</name>
</gene>
<feature type="chain" id="PRO_0000148217" description="Phosphoribosylformylglycinamidine cyclo-ligase">
    <location>
        <begin position="1"/>
        <end position="340"/>
    </location>
</feature>
<organism>
    <name type="scientific">Lactococcus lactis subsp. cremoris (strain MG1363)</name>
    <dbReference type="NCBI Taxonomy" id="416870"/>
    <lineage>
        <taxon>Bacteria</taxon>
        <taxon>Bacillati</taxon>
        <taxon>Bacillota</taxon>
        <taxon>Bacilli</taxon>
        <taxon>Lactobacillales</taxon>
        <taxon>Streptococcaceae</taxon>
        <taxon>Lactococcus</taxon>
        <taxon>Lactococcus cremoris subsp. cremoris</taxon>
    </lineage>
</organism>
<evidence type="ECO:0000255" key="1">
    <source>
        <dbReference type="HAMAP-Rule" id="MF_00741"/>
    </source>
</evidence>
<sequence>MTVSENAYAKSGVDVEAGYEVVSRIKKHVAKTERLGVLGALGGFGGSFDLSVLDVKEPVLISGTDGVGTKLMLAIRADKHDTIGIDCVAMCVNDIIAAGAEPLYFLDYIATGKNIPEKLEQVVAGVAEGCLQAGAALIGGETAEMPGMYDEDDYDLAGFAVGVAEKSQLIDGEKDVEAGDVLLGLASSGIHSNGYSLVRKVFADFDLNESLPELDQSLIDTLLTPTKIYVKELLPLIKQNKIKGIAHITGGGFHENLPRMFGNSLSAEIVEGSWDVLPIFKALEKYGSIKHEEMYEIFNMGIGMVIAVAPENAAALKKELNAFEIGQMVNRQEAPVVIKK</sequence>
<name>PUR5_LACLM</name>
<keyword id="KW-0067">ATP-binding</keyword>
<keyword id="KW-0963">Cytoplasm</keyword>
<keyword id="KW-0436">Ligase</keyword>
<keyword id="KW-0547">Nucleotide-binding</keyword>
<keyword id="KW-0658">Purine biosynthesis</keyword>
<protein>
    <recommendedName>
        <fullName evidence="1">Phosphoribosylformylglycinamidine cyclo-ligase</fullName>
        <ecNumber evidence="1">6.3.3.1</ecNumber>
    </recommendedName>
    <alternativeName>
        <fullName evidence="1">AIR synthase</fullName>
    </alternativeName>
    <alternativeName>
        <fullName evidence="1">AIRS</fullName>
    </alternativeName>
    <alternativeName>
        <fullName evidence="1">Phosphoribosyl-aminoimidazole synthetase</fullName>
    </alternativeName>
</protein>
<dbReference type="EC" id="6.3.3.1" evidence="1"/>
<dbReference type="EMBL" id="AF016634">
    <property type="protein sequence ID" value="AAC16901.1"/>
    <property type="molecule type" value="Genomic_DNA"/>
</dbReference>
<dbReference type="EMBL" id="AM406671">
    <property type="protein sequence ID" value="CAL97580.1"/>
    <property type="molecule type" value="Genomic_DNA"/>
</dbReference>
<dbReference type="RefSeq" id="WP_011834923.1">
    <property type="nucleotide sequence ID" value="NC_009004.1"/>
</dbReference>
<dbReference type="SMR" id="O68186"/>
<dbReference type="STRING" id="416870.llmg_0987"/>
<dbReference type="KEGG" id="llm:llmg_0987"/>
<dbReference type="eggNOG" id="COG0150">
    <property type="taxonomic scope" value="Bacteria"/>
</dbReference>
<dbReference type="HOGENOM" id="CLU_047116_0_0_9"/>
<dbReference type="PhylomeDB" id="O68186"/>
<dbReference type="UniPathway" id="UPA00074">
    <property type="reaction ID" value="UER00129"/>
</dbReference>
<dbReference type="Proteomes" id="UP000000364">
    <property type="component" value="Chromosome"/>
</dbReference>
<dbReference type="GO" id="GO:0005829">
    <property type="term" value="C:cytosol"/>
    <property type="evidence" value="ECO:0007669"/>
    <property type="project" value="TreeGrafter"/>
</dbReference>
<dbReference type="GO" id="GO:0005524">
    <property type="term" value="F:ATP binding"/>
    <property type="evidence" value="ECO:0007669"/>
    <property type="project" value="UniProtKB-KW"/>
</dbReference>
<dbReference type="GO" id="GO:0004637">
    <property type="term" value="F:phosphoribosylamine-glycine ligase activity"/>
    <property type="evidence" value="ECO:0007669"/>
    <property type="project" value="TreeGrafter"/>
</dbReference>
<dbReference type="GO" id="GO:0004641">
    <property type="term" value="F:phosphoribosylformylglycinamidine cyclo-ligase activity"/>
    <property type="evidence" value="ECO:0007669"/>
    <property type="project" value="UniProtKB-UniRule"/>
</dbReference>
<dbReference type="GO" id="GO:0006189">
    <property type="term" value="P:'de novo' IMP biosynthetic process"/>
    <property type="evidence" value="ECO:0007669"/>
    <property type="project" value="UniProtKB-UniRule"/>
</dbReference>
<dbReference type="GO" id="GO:0046084">
    <property type="term" value="P:adenine biosynthetic process"/>
    <property type="evidence" value="ECO:0007669"/>
    <property type="project" value="TreeGrafter"/>
</dbReference>
<dbReference type="CDD" id="cd02196">
    <property type="entry name" value="PurM"/>
    <property type="match status" value="1"/>
</dbReference>
<dbReference type="FunFam" id="3.30.1330.10:FF:000001">
    <property type="entry name" value="Phosphoribosylformylglycinamidine cyclo-ligase"/>
    <property type="match status" value="1"/>
</dbReference>
<dbReference type="FunFam" id="3.90.650.10:FF:000011">
    <property type="entry name" value="Phosphoribosylformylglycinamidine cyclo-ligase"/>
    <property type="match status" value="1"/>
</dbReference>
<dbReference type="Gene3D" id="3.90.650.10">
    <property type="entry name" value="PurM-like C-terminal domain"/>
    <property type="match status" value="1"/>
</dbReference>
<dbReference type="Gene3D" id="3.30.1330.10">
    <property type="entry name" value="PurM-like, N-terminal domain"/>
    <property type="match status" value="1"/>
</dbReference>
<dbReference type="HAMAP" id="MF_00741">
    <property type="entry name" value="AIRS"/>
    <property type="match status" value="1"/>
</dbReference>
<dbReference type="InterPro" id="IPR010918">
    <property type="entry name" value="PurM-like_C_dom"/>
</dbReference>
<dbReference type="InterPro" id="IPR036676">
    <property type="entry name" value="PurM-like_C_sf"/>
</dbReference>
<dbReference type="InterPro" id="IPR016188">
    <property type="entry name" value="PurM-like_N"/>
</dbReference>
<dbReference type="InterPro" id="IPR036921">
    <property type="entry name" value="PurM-like_N_sf"/>
</dbReference>
<dbReference type="InterPro" id="IPR004733">
    <property type="entry name" value="PurM_cligase"/>
</dbReference>
<dbReference type="NCBIfam" id="TIGR00878">
    <property type="entry name" value="purM"/>
    <property type="match status" value="1"/>
</dbReference>
<dbReference type="PANTHER" id="PTHR10520:SF12">
    <property type="entry name" value="TRIFUNCTIONAL PURINE BIOSYNTHETIC PROTEIN ADENOSINE-3"/>
    <property type="match status" value="1"/>
</dbReference>
<dbReference type="PANTHER" id="PTHR10520">
    <property type="entry name" value="TRIFUNCTIONAL PURINE BIOSYNTHETIC PROTEIN ADENOSINE-3-RELATED"/>
    <property type="match status" value="1"/>
</dbReference>
<dbReference type="Pfam" id="PF00586">
    <property type="entry name" value="AIRS"/>
    <property type="match status" value="1"/>
</dbReference>
<dbReference type="Pfam" id="PF02769">
    <property type="entry name" value="AIRS_C"/>
    <property type="match status" value="1"/>
</dbReference>
<dbReference type="SUPFAM" id="SSF56042">
    <property type="entry name" value="PurM C-terminal domain-like"/>
    <property type="match status" value="1"/>
</dbReference>
<dbReference type="SUPFAM" id="SSF55326">
    <property type="entry name" value="PurM N-terminal domain-like"/>
    <property type="match status" value="1"/>
</dbReference>
<reference key="1">
    <citation type="thesis" date="1998" institute="University of Cambridge" country="United Kingdom">
        <title>Chaperones and ATP-dependent proteases of Lactococcus lactis.</title>
        <authorList>
            <person name="Coward C."/>
        </authorList>
    </citation>
    <scope>NUCLEOTIDE SEQUENCE [GENOMIC DNA]</scope>
</reference>
<reference key="2">
    <citation type="journal article" date="2007" name="J. Bacteriol.">
        <title>The complete genome sequence of the lactic acid bacterial paradigm Lactococcus lactis subsp. cremoris MG1363.</title>
        <authorList>
            <person name="Wegmann U."/>
            <person name="O'Connell-Motherway M."/>
            <person name="Zomer A."/>
            <person name="Buist G."/>
            <person name="Shearman C."/>
            <person name="Canchaya C."/>
            <person name="Ventura M."/>
            <person name="Goesmann A."/>
            <person name="Gasson M.J."/>
            <person name="Kuipers O.P."/>
            <person name="van Sinderen D."/>
            <person name="Kok J."/>
        </authorList>
    </citation>
    <scope>NUCLEOTIDE SEQUENCE [LARGE SCALE GENOMIC DNA]</scope>
    <source>
        <strain>MG1363</strain>
    </source>
</reference>
<accession>O68186</accession>
<accession>A2RJX4</accession>
<comment type="catalytic activity">
    <reaction evidence="1">
        <text>2-formamido-N(1)-(5-O-phospho-beta-D-ribosyl)acetamidine + ATP = 5-amino-1-(5-phospho-beta-D-ribosyl)imidazole + ADP + phosphate + H(+)</text>
        <dbReference type="Rhea" id="RHEA:23032"/>
        <dbReference type="ChEBI" id="CHEBI:15378"/>
        <dbReference type="ChEBI" id="CHEBI:30616"/>
        <dbReference type="ChEBI" id="CHEBI:43474"/>
        <dbReference type="ChEBI" id="CHEBI:137981"/>
        <dbReference type="ChEBI" id="CHEBI:147287"/>
        <dbReference type="ChEBI" id="CHEBI:456216"/>
        <dbReference type="EC" id="6.3.3.1"/>
    </reaction>
</comment>
<comment type="pathway">
    <text evidence="1">Purine metabolism; IMP biosynthesis via de novo pathway; 5-amino-1-(5-phospho-D-ribosyl)imidazole from N(2)-formyl-N(1)-(5-phospho-D-ribosyl)glycinamide: step 2/2.</text>
</comment>
<comment type="subcellular location">
    <subcellularLocation>
        <location evidence="1">Cytoplasm</location>
    </subcellularLocation>
</comment>
<comment type="similarity">
    <text evidence="1">Belongs to the AIR synthase family.</text>
</comment>
<proteinExistence type="inferred from homology"/>